<proteinExistence type="inferred from homology"/>
<reference key="1">
    <citation type="journal article" date="2007" name="J. Bacteriol.">
        <title>The complete genome sequence of Bacillus thuringiensis Al Hakam.</title>
        <authorList>
            <person name="Challacombe J.F."/>
            <person name="Altherr M.R."/>
            <person name="Xie G."/>
            <person name="Bhotika S.S."/>
            <person name="Brown N."/>
            <person name="Bruce D."/>
            <person name="Campbell C.S."/>
            <person name="Campbell M.L."/>
            <person name="Chen J."/>
            <person name="Chertkov O."/>
            <person name="Cleland C."/>
            <person name="Dimitrijevic M."/>
            <person name="Doggett N.A."/>
            <person name="Fawcett J.J."/>
            <person name="Glavina T."/>
            <person name="Goodwin L.A."/>
            <person name="Green L.D."/>
            <person name="Han C.S."/>
            <person name="Hill K.K."/>
            <person name="Hitchcock P."/>
            <person name="Jackson P.J."/>
            <person name="Keim P."/>
            <person name="Kewalramani A.R."/>
            <person name="Longmire J."/>
            <person name="Lucas S."/>
            <person name="Malfatti S."/>
            <person name="Martinez D."/>
            <person name="McMurry K."/>
            <person name="Meincke L.J."/>
            <person name="Misra M."/>
            <person name="Moseman B.L."/>
            <person name="Mundt M."/>
            <person name="Munk A.C."/>
            <person name="Okinaka R.T."/>
            <person name="Parson-Quintana B."/>
            <person name="Reilly L.P."/>
            <person name="Richardson P."/>
            <person name="Robinson D.L."/>
            <person name="Saunders E."/>
            <person name="Tapia R."/>
            <person name="Tesmer J.G."/>
            <person name="Thayer N."/>
            <person name="Thompson L.S."/>
            <person name="Tice H."/>
            <person name="Ticknor L.O."/>
            <person name="Wills P.L."/>
            <person name="Gilna P."/>
            <person name="Brettin T.S."/>
        </authorList>
    </citation>
    <scope>NUCLEOTIDE SEQUENCE [LARGE SCALE GENOMIC DNA]</scope>
    <source>
        <strain>Al Hakam</strain>
    </source>
</reference>
<accession>A0RJZ5</accession>
<comment type="function">
    <text evidence="1">Transfers a GMP moiety from GTP to Mo-molybdopterin (Mo-MPT) cofactor (Moco or molybdenum cofactor) to form Mo-molybdopterin guanine dinucleotide (Mo-MGD) cofactor.</text>
</comment>
<comment type="catalytic activity">
    <reaction evidence="1">
        <text>Mo-molybdopterin + GTP + H(+) = Mo-molybdopterin guanine dinucleotide + diphosphate</text>
        <dbReference type="Rhea" id="RHEA:34243"/>
        <dbReference type="ChEBI" id="CHEBI:15378"/>
        <dbReference type="ChEBI" id="CHEBI:33019"/>
        <dbReference type="ChEBI" id="CHEBI:37565"/>
        <dbReference type="ChEBI" id="CHEBI:71302"/>
        <dbReference type="ChEBI" id="CHEBI:71310"/>
        <dbReference type="EC" id="2.7.7.77"/>
    </reaction>
</comment>
<comment type="cofactor">
    <cofactor evidence="1">
        <name>Mg(2+)</name>
        <dbReference type="ChEBI" id="CHEBI:18420"/>
    </cofactor>
</comment>
<comment type="subcellular location">
    <subcellularLocation>
        <location evidence="1">Cytoplasm</location>
    </subcellularLocation>
</comment>
<comment type="domain">
    <text evidence="1">The N-terminal domain determines nucleotide recognition and specific binding, while the C-terminal domain determines the specific binding to the target protein.</text>
</comment>
<comment type="similarity">
    <text evidence="1">Belongs to the MobA family.</text>
</comment>
<organism>
    <name type="scientific">Bacillus thuringiensis (strain Al Hakam)</name>
    <dbReference type="NCBI Taxonomy" id="412694"/>
    <lineage>
        <taxon>Bacteria</taxon>
        <taxon>Bacillati</taxon>
        <taxon>Bacillota</taxon>
        <taxon>Bacilli</taxon>
        <taxon>Bacillales</taxon>
        <taxon>Bacillaceae</taxon>
        <taxon>Bacillus</taxon>
        <taxon>Bacillus cereus group</taxon>
    </lineage>
</organism>
<keyword id="KW-0963">Cytoplasm</keyword>
<keyword id="KW-0342">GTP-binding</keyword>
<keyword id="KW-0460">Magnesium</keyword>
<keyword id="KW-0479">Metal-binding</keyword>
<keyword id="KW-0501">Molybdenum cofactor biosynthesis</keyword>
<keyword id="KW-0547">Nucleotide-binding</keyword>
<keyword id="KW-0808">Transferase</keyword>
<dbReference type="EC" id="2.7.7.77" evidence="1"/>
<dbReference type="EMBL" id="CP000485">
    <property type="protein sequence ID" value="ABK87538.1"/>
    <property type="molecule type" value="Genomic_DNA"/>
</dbReference>
<dbReference type="RefSeq" id="WP_000049602.1">
    <property type="nucleotide sequence ID" value="NC_008600.1"/>
</dbReference>
<dbReference type="SMR" id="A0RJZ5"/>
<dbReference type="KEGG" id="btl:BALH_4338"/>
<dbReference type="HOGENOM" id="CLU_055597_2_0_9"/>
<dbReference type="GO" id="GO:0005737">
    <property type="term" value="C:cytoplasm"/>
    <property type="evidence" value="ECO:0007669"/>
    <property type="project" value="UniProtKB-SubCell"/>
</dbReference>
<dbReference type="GO" id="GO:0005525">
    <property type="term" value="F:GTP binding"/>
    <property type="evidence" value="ECO:0007669"/>
    <property type="project" value="UniProtKB-UniRule"/>
</dbReference>
<dbReference type="GO" id="GO:0046872">
    <property type="term" value="F:metal ion binding"/>
    <property type="evidence" value="ECO:0007669"/>
    <property type="project" value="UniProtKB-KW"/>
</dbReference>
<dbReference type="GO" id="GO:0061603">
    <property type="term" value="F:molybdenum cofactor guanylyltransferase activity"/>
    <property type="evidence" value="ECO:0007669"/>
    <property type="project" value="UniProtKB-EC"/>
</dbReference>
<dbReference type="GO" id="GO:0006777">
    <property type="term" value="P:Mo-molybdopterin cofactor biosynthetic process"/>
    <property type="evidence" value="ECO:0007669"/>
    <property type="project" value="UniProtKB-KW"/>
</dbReference>
<dbReference type="CDD" id="cd02503">
    <property type="entry name" value="MobA"/>
    <property type="match status" value="1"/>
</dbReference>
<dbReference type="FunFam" id="3.90.550.10:FF:000121">
    <property type="entry name" value="Probable molybdenum cofactor guanylyltransferase"/>
    <property type="match status" value="1"/>
</dbReference>
<dbReference type="Gene3D" id="3.90.550.10">
    <property type="entry name" value="Spore Coat Polysaccharide Biosynthesis Protein SpsA, Chain A"/>
    <property type="match status" value="1"/>
</dbReference>
<dbReference type="HAMAP" id="MF_00316">
    <property type="entry name" value="MobA"/>
    <property type="match status" value="1"/>
</dbReference>
<dbReference type="InterPro" id="IPR025877">
    <property type="entry name" value="MobA-like_NTP_Trfase"/>
</dbReference>
<dbReference type="InterPro" id="IPR013482">
    <property type="entry name" value="Molybde_CF_guanTrfase"/>
</dbReference>
<dbReference type="InterPro" id="IPR029044">
    <property type="entry name" value="Nucleotide-diphossugar_trans"/>
</dbReference>
<dbReference type="PANTHER" id="PTHR19136">
    <property type="entry name" value="MOLYBDENUM COFACTOR GUANYLYLTRANSFERASE"/>
    <property type="match status" value="1"/>
</dbReference>
<dbReference type="PANTHER" id="PTHR19136:SF81">
    <property type="entry name" value="MOLYBDENUM COFACTOR GUANYLYLTRANSFERASE"/>
    <property type="match status" value="1"/>
</dbReference>
<dbReference type="Pfam" id="PF12804">
    <property type="entry name" value="NTP_transf_3"/>
    <property type="match status" value="1"/>
</dbReference>
<dbReference type="SUPFAM" id="SSF53448">
    <property type="entry name" value="Nucleotide-diphospho-sugar transferases"/>
    <property type="match status" value="1"/>
</dbReference>
<gene>
    <name evidence="1" type="primary">mobA</name>
    <name type="ordered locus">BALH_4338</name>
</gene>
<evidence type="ECO:0000255" key="1">
    <source>
        <dbReference type="HAMAP-Rule" id="MF_00316"/>
    </source>
</evidence>
<protein>
    <recommendedName>
        <fullName evidence="1">Probable molybdenum cofactor guanylyltransferase</fullName>
        <shortName evidence="1">MoCo guanylyltransferase</shortName>
        <ecNumber evidence="1">2.7.7.77</ecNumber>
    </recommendedName>
    <alternativeName>
        <fullName evidence="1">GTP:molybdopterin guanylyltransferase</fullName>
    </alternativeName>
    <alternativeName>
        <fullName evidence="1">Mo-MPT guanylyltransferase</fullName>
    </alternativeName>
    <alternativeName>
        <fullName evidence="1">Molybdopterin guanylyltransferase</fullName>
    </alternativeName>
    <alternativeName>
        <fullName evidence="1">Molybdopterin-guanine dinucleotide synthase</fullName>
        <shortName evidence="1">MGD synthase</shortName>
    </alternativeName>
</protein>
<name>MOBA_BACAH</name>
<feature type="chain" id="PRO_1000019097" description="Probable molybdenum cofactor guanylyltransferase">
    <location>
        <begin position="1"/>
        <end position="200"/>
    </location>
</feature>
<feature type="binding site" evidence="1">
    <location>
        <begin position="9"/>
        <end position="11"/>
    </location>
    <ligand>
        <name>GTP</name>
        <dbReference type="ChEBI" id="CHEBI:37565"/>
    </ligand>
</feature>
<feature type="binding site" evidence="1">
    <location>
        <position position="21"/>
    </location>
    <ligand>
        <name>GTP</name>
        <dbReference type="ChEBI" id="CHEBI:37565"/>
    </ligand>
</feature>
<feature type="binding site" evidence="1">
    <location>
        <position position="69"/>
    </location>
    <ligand>
        <name>GTP</name>
        <dbReference type="ChEBI" id="CHEBI:37565"/>
    </ligand>
</feature>
<feature type="binding site" evidence="1">
    <location>
        <position position="100"/>
    </location>
    <ligand>
        <name>GTP</name>
        <dbReference type="ChEBI" id="CHEBI:37565"/>
    </ligand>
</feature>
<feature type="binding site" evidence="1">
    <location>
        <position position="100"/>
    </location>
    <ligand>
        <name>Mg(2+)</name>
        <dbReference type="ChEBI" id="CHEBI:18420"/>
    </ligand>
</feature>
<sequence>MSKYAGIVLAGGMSSRFGEPKALASWQGGTFIEHILKVMTSTLQEVVVISHSDIKERVEKLVQVPVIEDIPHYKGNGPLAGIVSGMEYIEADWYAIMPCDAPNVSHEWFTILLGQTSNEYDAVVPIINGRKQPLLAAYHNRVKEKIYALLQEEKRSMVQLLSQCNVKYIAGEDVQANADWFINVNTKEEYVQAQKDLSNE</sequence>